<name>ASF2_YEAST</name>
<feature type="chain" id="PRO_0000064696" description="Anti-silencing protein 2">
    <location>
        <begin position="1"/>
        <end position="525"/>
    </location>
</feature>
<feature type="region of interest" description="Disordered" evidence="1">
    <location>
        <begin position="467"/>
        <end position="525"/>
    </location>
</feature>
<feature type="compositionally biased region" description="Basic and acidic residues" evidence="1">
    <location>
        <begin position="479"/>
        <end position="494"/>
    </location>
</feature>
<dbReference type="EMBL" id="L07649">
    <property type="protein sequence ID" value="AAC37513.1"/>
    <property type="molecule type" value="Genomic_DNA"/>
</dbReference>
<dbReference type="EMBL" id="X83276">
    <property type="protein sequence ID" value="CAA58250.1"/>
    <property type="molecule type" value="Genomic_DNA"/>
</dbReference>
<dbReference type="EMBL" id="Z74245">
    <property type="protein sequence ID" value="CAA98774.1"/>
    <property type="molecule type" value="Genomic_DNA"/>
</dbReference>
<dbReference type="EMBL" id="X99000">
    <property type="protein sequence ID" value="CAA67472.1"/>
    <property type="molecule type" value="Genomic_DNA"/>
</dbReference>
<dbReference type="EMBL" id="BK006938">
    <property type="protein sequence ID" value="DAA11667.1"/>
    <property type="molecule type" value="Genomic_DNA"/>
</dbReference>
<dbReference type="PIR" id="S30767">
    <property type="entry name" value="S30767"/>
</dbReference>
<dbReference type="RefSeq" id="NP_010084.1">
    <property type="nucleotide sequence ID" value="NM_001180257.1"/>
</dbReference>
<dbReference type="SMR" id="P32448"/>
<dbReference type="BioGRID" id="31849">
    <property type="interactions" value="57"/>
</dbReference>
<dbReference type="FunCoup" id="P32448">
    <property type="interactions" value="56"/>
</dbReference>
<dbReference type="IntAct" id="P32448">
    <property type="interactions" value="6"/>
</dbReference>
<dbReference type="MINT" id="P32448"/>
<dbReference type="STRING" id="4932.YDL197C"/>
<dbReference type="GlyGen" id="P32448">
    <property type="glycosylation" value="1 site"/>
</dbReference>
<dbReference type="iPTMnet" id="P32448"/>
<dbReference type="PaxDb" id="4932-YDL197C"/>
<dbReference type="PeptideAtlas" id="P32448"/>
<dbReference type="EnsemblFungi" id="YDL197C_mRNA">
    <property type="protein sequence ID" value="YDL197C"/>
    <property type="gene ID" value="YDL197C"/>
</dbReference>
<dbReference type="GeneID" id="851330"/>
<dbReference type="KEGG" id="sce:YDL197C"/>
<dbReference type="AGR" id="SGD:S000002356"/>
<dbReference type="SGD" id="S000002356">
    <property type="gene designation" value="ASF2"/>
</dbReference>
<dbReference type="VEuPathDB" id="FungiDB:YDL197C"/>
<dbReference type="eggNOG" id="ENOG502T1NR">
    <property type="taxonomic scope" value="Eukaryota"/>
</dbReference>
<dbReference type="HOGENOM" id="CLU_518903_0_0_1"/>
<dbReference type="InParanoid" id="P32448"/>
<dbReference type="OMA" id="RLQPPHI"/>
<dbReference type="OrthoDB" id="4049654at2759"/>
<dbReference type="BioCyc" id="YEAST:G3O-29581-MONOMER"/>
<dbReference type="BioGRID-ORCS" id="851330">
    <property type="hits" value="7 hits in 10 CRISPR screens"/>
</dbReference>
<dbReference type="PRO" id="PR:P32448"/>
<dbReference type="Proteomes" id="UP000002311">
    <property type="component" value="Chromosome IV"/>
</dbReference>
<dbReference type="RNAct" id="P32448">
    <property type="molecule type" value="protein"/>
</dbReference>
<dbReference type="GO" id="GO:0000781">
    <property type="term" value="C:chromosome, telomeric region"/>
    <property type="evidence" value="ECO:0000314"/>
    <property type="project" value="SGD"/>
</dbReference>
<dbReference type="GO" id="GO:0005634">
    <property type="term" value="C:nucleus"/>
    <property type="evidence" value="ECO:0000314"/>
    <property type="project" value="SGD"/>
</dbReference>
<dbReference type="GO" id="GO:0030466">
    <property type="term" value="P:silent mating-type cassette heterochromatin formation"/>
    <property type="evidence" value="ECO:0000315"/>
    <property type="project" value="SGD"/>
</dbReference>
<organism>
    <name type="scientific">Saccharomyces cerevisiae (strain ATCC 204508 / S288c)</name>
    <name type="common">Baker's yeast</name>
    <dbReference type="NCBI Taxonomy" id="559292"/>
    <lineage>
        <taxon>Eukaryota</taxon>
        <taxon>Fungi</taxon>
        <taxon>Dikarya</taxon>
        <taxon>Ascomycota</taxon>
        <taxon>Saccharomycotina</taxon>
        <taxon>Saccharomycetes</taxon>
        <taxon>Saccharomycetales</taxon>
        <taxon>Saccharomycetaceae</taxon>
        <taxon>Saccharomyces</taxon>
    </lineage>
</organism>
<evidence type="ECO:0000256" key="1">
    <source>
        <dbReference type="SAM" id="MobiDB-lite"/>
    </source>
</evidence>
<evidence type="ECO:0000269" key="2">
    <source>
    </source>
</evidence>
<proteinExistence type="evidence at protein level"/>
<gene>
    <name type="primary">ASF2</name>
    <name type="ordered locus">YDL197C</name>
    <name type="ORF">D1219</name>
</gene>
<keyword id="KW-1185">Reference proteome</keyword>
<protein>
    <recommendedName>
        <fullName>Anti-silencing protein 2</fullName>
    </recommendedName>
</protein>
<reference key="1">
    <citation type="journal article" date="1997" name="Yeast">
        <title>Two new S-phase-specific genes from Saccharomyces cerevisiae.</title>
        <authorList>
            <person name="Le S."/>
            <person name="Davis C."/>
            <person name="Konopka J.B."/>
            <person name="Sternglanz R."/>
        </authorList>
    </citation>
    <scope>NUCLEOTIDE SEQUENCE [GENOMIC DNA]</scope>
</reference>
<reference key="2">
    <citation type="journal article" date="1996" name="Yeast">
        <title>The sequence of 23 kb surrounding the SNF3 locus on the left arm of yeast chromosome IV reveals the location of five known genes and characterizes at least six new open reading frames including putative genes for ribosomal protein L35 and a sugar transport protein.</title>
        <authorList>
            <person name="Verhasselt P."/>
            <person name="Voet M."/>
            <person name="Mathys J."/>
            <person name="Volckaert G."/>
        </authorList>
    </citation>
    <scope>NUCLEOTIDE SEQUENCE [GENOMIC DNA]</scope>
    <source>
        <strain>ATCC 96604 / S288c / FY1679</strain>
    </source>
</reference>
<reference key="3">
    <citation type="journal article" date="1997" name="Nature">
        <title>The nucleotide sequence of Saccharomyces cerevisiae chromosome IV.</title>
        <authorList>
            <person name="Jacq C."/>
            <person name="Alt-Moerbe J."/>
            <person name="Andre B."/>
            <person name="Arnold W."/>
            <person name="Bahr A."/>
            <person name="Ballesta J.P.G."/>
            <person name="Bargues M."/>
            <person name="Baron L."/>
            <person name="Becker A."/>
            <person name="Biteau N."/>
            <person name="Bloecker H."/>
            <person name="Blugeon C."/>
            <person name="Boskovic J."/>
            <person name="Brandt P."/>
            <person name="Brueckner M."/>
            <person name="Buitrago M.J."/>
            <person name="Coster F."/>
            <person name="Delaveau T."/>
            <person name="del Rey F."/>
            <person name="Dujon B."/>
            <person name="Eide L.G."/>
            <person name="Garcia-Cantalejo J.M."/>
            <person name="Goffeau A."/>
            <person name="Gomez-Peris A."/>
            <person name="Granotier C."/>
            <person name="Hanemann V."/>
            <person name="Hankeln T."/>
            <person name="Hoheisel J.D."/>
            <person name="Jaeger W."/>
            <person name="Jimenez A."/>
            <person name="Jonniaux J.-L."/>
            <person name="Kraemer C."/>
            <person name="Kuester H."/>
            <person name="Laamanen P."/>
            <person name="Legros Y."/>
            <person name="Louis E.J."/>
            <person name="Moeller-Rieker S."/>
            <person name="Monnet A."/>
            <person name="Moro M."/>
            <person name="Mueller-Auer S."/>
            <person name="Nussbaumer B."/>
            <person name="Paricio N."/>
            <person name="Paulin L."/>
            <person name="Perea J."/>
            <person name="Perez-Alonso M."/>
            <person name="Perez-Ortin J.E."/>
            <person name="Pohl T.M."/>
            <person name="Prydz H."/>
            <person name="Purnelle B."/>
            <person name="Rasmussen S.W."/>
            <person name="Remacha M.A."/>
            <person name="Revuelta J.L."/>
            <person name="Rieger M."/>
            <person name="Salom D."/>
            <person name="Saluz H.P."/>
            <person name="Saiz J.E."/>
            <person name="Saren A.-M."/>
            <person name="Schaefer M."/>
            <person name="Scharfe M."/>
            <person name="Schmidt E.R."/>
            <person name="Schneider C."/>
            <person name="Scholler P."/>
            <person name="Schwarz S."/>
            <person name="Soler-Mira A."/>
            <person name="Urrestarazu L.A."/>
            <person name="Verhasselt P."/>
            <person name="Vissers S."/>
            <person name="Voet M."/>
            <person name="Volckaert G."/>
            <person name="Wagner G."/>
            <person name="Wambutt R."/>
            <person name="Wedler E."/>
            <person name="Wedler H."/>
            <person name="Woelfl S."/>
            <person name="Harris D.E."/>
            <person name="Bowman S."/>
            <person name="Brown D."/>
            <person name="Churcher C.M."/>
            <person name="Connor R."/>
            <person name="Dedman K."/>
            <person name="Gentles S."/>
            <person name="Hamlin N."/>
            <person name="Hunt S."/>
            <person name="Jones L."/>
            <person name="McDonald S."/>
            <person name="Murphy L.D."/>
            <person name="Niblett D."/>
            <person name="Odell C."/>
            <person name="Oliver K."/>
            <person name="Rajandream M.A."/>
            <person name="Richards C."/>
            <person name="Shore L."/>
            <person name="Walsh S.V."/>
            <person name="Barrell B.G."/>
            <person name="Dietrich F.S."/>
            <person name="Mulligan J.T."/>
            <person name="Allen E."/>
            <person name="Araujo R."/>
            <person name="Aviles E."/>
            <person name="Berno A."/>
            <person name="Carpenter J."/>
            <person name="Chen E."/>
            <person name="Cherry J.M."/>
            <person name="Chung E."/>
            <person name="Duncan M."/>
            <person name="Hunicke-Smith S."/>
            <person name="Hyman R.W."/>
            <person name="Komp C."/>
            <person name="Lashkari D."/>
            <person name="Lew H."/>
            <person name="Lin D."/>
            <person name="Mosedale D."/>
            <person name="Nakahara K."/>
            <person name="Namath A."/>
            <person name="Oefner P."/>
            <person name="Oh C."/>
            <person name="Petel F.X."/>
            <person name="Roberts D."/>
            <person name="Schramm S."/>
            <person name="Schroeder M."/>
            <person name="Shogren T."/>
            <person name="Shroff N."/>
            <person name="Winant A."/>
            <person name="Yelton M.A."/>
            <person name="Botstein D."/>
            <person name="Davis R.W."/>
            <person name="Johnston M."/>
            <person name="Andrews S."/>
            <person name="Brinkman R."/>
            <person name="Cooper J."/>
            <person name="Ding H."/>
            <person name="Du Z."/>
            <person name="Favello A."/>
            <person name="Fulton L."/>
            <person name="Gattung S."/>
            <person name="Greco T."/>
            <person name="Hallsworth K."/>
            <person name="Hawkins J."/>
            <person name="Hillier L.W."/>
            <person name="Jier M."/>
            <person name="Johnson D."/>
            <person name="Johnston L."/>
            <person name="Kirsten J."/>
            <person name="Kucaba T."/>
            <person name="Langston Y."/>
            <person name="Latreille P."/>
            <person name="Le T."/>
            <person name="Mardis E."/>
            <person name="Menezes S."/>
            <person name="Miller N."/>
            <person name="Nhan M."/>
            <person name="Pauley A."/>
            <person name="Peluso D."/>
            <person name="Rifkin L."/>
            <person name="Riles L."/>
            <person name="Taich A."/>
            <person name="Trevaskis E."/>
            <person name="Vignati D."/>
            <person name="Wilcox L."/>
            <person name="Wohldman P."/>
            <person name="Vaudin M."/>
            <person name="Wilson R."/>
            <person name="Waterston R."/>
            <person name="Albermann K."/>
            <person name="Hani J."/>
            <person name="Heumann K."/>
            <person name="Kleine K."/>
            <person name="Mewes H.-W."/>
            <person name="Zollner A."/>
            <person name="Zaccaria P."/>
        </authorList>
    </citation>
    <scope>NUCLEOTIDE SEQUENCE [LARGE SCALE GENOMIC DNA]</scope>
    <source>
        <strain>ATCC 204508 / S288c</strain>
    </source>
</reference>
<reference key="4">
    <citation type="journal article" date="2014" name="G3 (Bethesda)">
        <title>The reference genome sequence of Saccharomyces cerevisiae: Then and now.</title>
        <authorList>
            <person name="Engel S.R."/>
            <person name="Dietrich F.S."/>
            <person name="Fisk D.G."/>
            <person name="Binkley G."/>
            <person name="Balakrishnan R."/>
            <person name="Costanzo M.C."/>
            <person name="Dwight S.S."/>
            <person name="Hitz B.C."/>
            <person name="Karra K."/>
            <person name="Nash R.S."/>
            <person name="Weng S."/>
            <person name="Wong E.D."/>
            <person name="Lloyd P."/>
            <person name="Skrzypek M.S."/>
            <person name="Miyasato S.R."/>
            <person name="Simison M."/>
            <person name="Cherry J.M."/>
        </authorList>
    </citation>
    <scope>GENOME REANNOTATION</scope>
    <source>
        <strain>ATCC 204508 / S288c</strain>
    </source>
</reference>
<reference key="5">
    <citation type="journal article" date="1997" name="Yeast">
        <title>The nucleotide sequence of a 39 kb segment of yeast chromosome IV: 12 new open reading frames, nine known genes and one gene for Gly-tRNA.</title>
        <authorList>
            <person name="Bahr A."/>
            <person name="Moeller-Rieker S."/>
            <person name="Hankeln T."/>
            <person name="Kraemer C."/>
            <person name="Protin U."/>
            <person name="Schmidt E.R."/>
        </authorList>
    </citation>
    <scope>NUCLEOTIDE SEQUENCE [GENOMIC DNA] OF 20-525</scope>
    <source>
        <strain>ATCC 96604 / S288c / FY1679</strain>
    </source>
</reference>
<reference key="6">
    <citation type="journal article" date="2003" name="Nature">
        <title>Global analysis of protein expression in yeast.</title>
        <authorList>
            <person name="Ghaemmaghami S."/>
            <person name="Huh W.-K."/>
            <person name="Bower K."/>
            <person name="Howson R.W."/>
            <person name="Belle A."/>
            <person name="Dephoure N."/>
            <person name="O'Shea E.K."/>
            <person name="Weissman J.S."/>
        </authorList>
    </citation>
    <scope>LEVEL OF PROTEIN EXPRESSION [LARGE SCALE ANALYSIS]</scope>
</reference>
<accession>P32448</accession>
<accession>D6VRF7</accession>
<comment type="function">
    <text>Derepression of silent mating type loci when overexpressed.</text>
</comment>
<comment type="miscellaneous">
    <text evidence="2">Present with 1910 molecules/cell in log phase SD medium.</text>
</comment>
<sequence>MPKNRGVLDAITRSVIDGSDQESSSSFNSDKEYAAVTKGLSSSRVQKKSSLRQMKSKVKELQSLVNHYRENEAALVSSAKLLSGEIIGYEIKMASLHGKMKSILDENNALKETHKSSAEKRIELVRLPSSKEERNYDEYTLLVNLKKEICAKLQDYKNVQNTVNTKLDEIHTFHEKYYEGLELSLDSKVFDAESSKELAKVRRELNNVRKNSEIKVNNLKMQLLQATKSLEHLKKQAKAKDDYLKCIPELVDKANLTMLSYKKSIANQRETIEALQAELSQQSETKGQIETETQNQVQIPTNVTLVDPFEENNPEDLFAIQEQELQDLRLHKKMADERSRTTHLHLERKNNTIKLLQSYVQSLIQRLPPAQRKHHLGIFQKLGSEKSCPLAPAVASTYAPLLLLSQHSNHQEIDNTPQRLLLAAPDGQSYSEKSTTLNLDYSSRKSYLSRLQPPHIANLKSLTLKTLPRVPTDSPQLPSKDKSQETAKKDDRPKLVANEPVTLDTSTPPVAQSLADSKHCSGLHK</sequence>